<protein>
    <recommendedName>
        <fullName evidence="1">6,7-dimethyl-8-ribityllumazine synthase</fullName>
        <shortName evidence="1">DMRL synthase</shortName>
        <shortName evidence="1">LS</shortName>
        <shortName evidence="1">Lumazine synthase</shortName>
        <ecNumber evidence="1">2.5.1.78</ecNumber>
    </recommendedName>
</protein>
<name>RISB_BRAHW</name>
<comment type="function">
    <text evidence="1">Catalyzes the formation of 6,7-dimethyl-8-ribityllumazine by condensation of 5-amino-6-(D-ribitylamino)uracil with 3,4-dihydroxy-2-butanone 4-phosphate. This is the penultimate step in the biosynthesis of riboflavin.</text>
</comment>
<comment type="catalytic activity">
    <reaction evidence="1">
        <text>(2S)-2-hydroxy-3-oxobutyl phosphate + 5-amino-6-(D-ribitylamino)uracil = 6,7-dimethyl-8-(1-D-ribityl)lumazine + phosphate + 2 H2O + H(+)</text>
        <dbReference type="Rhea" id="RHEA:26152"/>
        <dbReference type="ChEBI" id="CHEBI:15377"/>
        <dbReference type="ChEBI" id="CHEBI:15378"/>
        <dbReference type="ChEBI" id="CHEBI:15934"/>
        <dbReference type="ChEBI" id="CHEBI:43474"/>
        <dbReference type="ChEBI" id="CHEBI:58201"/>
        <dbReference type="ChEBI" id="CHEBI:58830"/>
        <dbReference type="EC" id="2.5.1.78"/>
    </reaction>
</comment>
<comment type="pathway">
    <text evidence="1">Cofactor biosynthesis; riboflavin biosynthesis; riboflavin from 2-hydroxy-3-oxobutyl phosphate and 5-amino-6-(D-ribitylamino)uracil: step 1/2.</text>
</comment>
<comment type="similarity">
    <text evidence="1">Belongs to the DMRL synthase family.</text>
</comment>
<reference key="1">
    <citation type="journal article" date="2009" name="PLoS ONE">
        <title>Genome sequence of the pathogenic intestinal spirochete Brachyspira hyodysenteriae reveals adaptations to its lifestyle in the porcine large intestine.</title>
        <authorList>
            <person name="Bellgard M.I."/>
            <person name="Wanchanthuek P."/>
            <person name="La T."/>
            <person name="Ryan K."/>
            <person name="Moolhuijzen P."/>
            <person name="Albertyn Z."/>
            <person name="Shaban B."/>
            <person name="Motro Y."/>
            <person name="Dunn D.S."/>
            <person name="Schibeci D."/>
            <person name="Hunter A."/>
            <person name="Barrero R."/>
            <person name="Phillips N.D."/>
            <person name="Hampson D.J."/>
        </authorList>
    </citation>
    <scope>NUCLEOTIDE SEQUENCE [LARGE SCALE GENOMIC DNA]</scope>
    <source>
        <strain>ATCC 49526 / WA1</strain>
    </source>
</reference>
<organism>
    <name type="scientific">Brachyspira hyodysenteriae (strain ATCC 49526 / WA1)</name>
    <dbReference type="NCBI Taxonomy" id="565034"/>
    <lineage>
        <taxon>Bacteria</taxon>
        <taxon>Pseudomonadati</taxon>
        <taxon>Spirochaetota</taxon>
        <taxon>Spirochaetia</taxon>
        <taxon>Brachyspirales</taxon>
        <taxon>Brachyspiraceae</taxon>
        <taxon>Brachyspira</taxon>
    </lineage>
</organism>
<keyword id="KW-0686">Riboflavin biosynthesis</keyword>
<keyword id="KW-0808">Transferase</keyword>
<sequence>MKTFEGKLVSEKPIKIGIVCARFNEFIVSKLLGGALDALSRHNIKDDDITVAWVPGAFEIPLIASKMAKSKKYDAVVCLGAVIRGSTTHYDYVCAEVSKGIANVSLNSDIPVMFGVLTTENIEQAIERAGTKAGNKGFDSAMAAIEMVNLIREIEK</sequence>
<evidence type="ECO:0000255" key="1">
    <source>
        <dbReference type="HAMAP-Rule" id="MF_00178"/>
    </source>
</evidence>
<accession>C0QVI8</accession>
<dbReference type="EC" id="2.5.1.78" evidence="1"/>
<dbReference type="EMBL" id="CP001357">
    <property type="protein sequence ID" value="ACN84489.1"/>
    <property type="molecule type" value="Genomic_DNA"/>
</dbReference>
<dbReference type="SMR" id="C0QVI8"/>
<dbReference type="STRING" id="565034.BHWA1_02030"/>
<dbReference type="KEGG" id="bhy:BHWA1_02030"/>
<dbReference type="eggNOG" id="COG0054">
    <property type="taxonomic scope" value="Bacteria"/>
</dbReference>
<dbReference type="HOGENOM" id="CLU_089358_1_1_12"/>
<dbReference type="UniPathway" id="UPA00275">
    <property type="reaction ID" value="UER00404"/>
</dbReference>
<dbReference type="Proteomes" id="UP000001803">
    <property type="component" value="Chromosome"/>
</dbReference>
<dbReference type="GO" id="GO:0005829">
    <property type="term" value="C:cytosol"/>
    <property type="evidence" value="ECO:0007669"/>
    <property type="project" value="TreeGrafter"/>
</dbReference>
<dbReference type="GO" id="GO:0009349">
    <property type="term" value="C:riboflavin synthase complex"/>
    <property type="evidence" value="ECO:0007669"/>
    <property type="project" value="InterPro"/>
</dbReference>
<dbReference type="GO" id="GO:0000906">
    <property type="term" value="F:6,7-dimethyl-8-ribityllumazine synthase activity"/>
    <property type="evidence" value="ECO:0007669"/>
    <property type="project" value="UniProtKB-UniRule"/>
</dbReference>
<dbReference type="GO" id="GO:0009231">
    <property type="term" value="P:riboflavin biosynthetic process"/>
    <property type="evidence" value="ECO:0007669"/>
    <property type="project" value="UniProtKB-UniRule"/>
</dbReference>
<dbReference type="CDD" id="cd09209">
    <property type="entry name" value="Lumazine_synthase-I"/>
    <property type="match status" value="1"/>
</dbReference>
<dbReference type="FunFam" id="3.40.50.960:FF:000001">
    <property type="entry name" value="6,7-dimethyl-8-ribityllumazine synthase"/>
    <property type="match status" value="1"/>
</dbReference>
<dbReference type="Gene3D" id="3.40.50.960">
    <property type="entry name" value="Lumazine/riboflavin synthase"/>
    <property type="match status" value="1"/>
</dbReference>
<dbReference type="HAMAP" id="MF_00178">
    <property type="entry name" value="Lumazine_synth"/>
    <property type="match status" value="1"/>
</dbReference>
<dbReference type="InterPro" id="IPR034964">
    <property type="entry name" value="LS"/>
</dbReference>
<dbReference type="InterPro" id="IPR002180">
    <property type="entry name" value="LS/RS"/>
</dbReference>
<dbReference type="InterPro" id="IPR036467">
    <property type="entry name" value="LS/RS_sf"/>
</dbReference>
<dbReference type="NCBIfam" id="TIGR00114">
    <property type="entry name" value="lumazine-synth"/>
    <property type="match status" value="1"/>
</dbReference>
<dbReference type="NCBIfam" id="NF000812">
    <property type="entry name" value="PRK00061.1-4"/>
    <property type="match status" value="1"/>
</dbReference>
<dbReference type="PANTHER" id="PTHR21058:SF0">
    <property type="entry name" value="6,7-DIMETHYL-8-RIBITYLLUMAZINE SYNTHASE"/>
    <property type="match status" value="1"/>
</dbReference>
<dbReference type="PANTHER" id="PTHR21058">
    <property type="entry name" value="6,7-DIMETHYL-8-RIBITYLLUMAZINE SYNTHASE DMRL SYNTHASE LUMAZINE SYNTHASE"/>
    <property type="match status" value="1"/>
</dbReference>
<dbReference type="Pfam" id="PF00885">
    <property type="entry name" value="DMRL_synthase"/>
    <property type="match status" value="1"/>
</dbReference>
<dbReference type="SUPFAM" id="SSF52121">
    <property type="entry name" value="Lumazine synthase"/>
    <property type="match status" value="1"/>
</dbReference>
<feature type="chain" id="PRO_1000195465" description="6,7-dimethyl-8-ribityllumazine synthase">
    <location>
        <begin position="1"/>
        <end position="156"/>
    </location>
</feature>
<feature type="active site" description="Proton donor" evidence="1">
    <location>
        <position position="89"/>
    </location>
</feature>
<feature type="binding site" evidence="1">
    <location>
        <position position="23"/>
    </location>
    <ligand>
        <name>5-amino-6-(D-ribitylamino)uracil</name>
        <dbReference type="ChEBI" id="CHEBI:15934"/>
    </ligand>
</feature>
<feature type="binding site" evidence="1">
    <location>
        <begin position="57"/>
        <end position="59"/>
    </location>
    <ligand>
        <name>5-amino-6-(D-ribitylamino)uracil</name>
        <dbReference type="ChEBI" id="CHEBI:15934"/>
    </ligand>
</feature>
<feature type="binding site" evidence="1">
    <location>
        <begin position="81"/>
        <end position="83"/>
    </location>
    <ligand>
        <name>5-amino-6-(D-ribitylamino)uracil</name>
        <dbReference type="ChEBI" id="CHEBI:15934"/>
    </ligand>
</feature>
<feature type="binding site" evidence="1">
    <location>
        <begin position="86"/>
        <end position="87"/>
    </location>
    <ligand>
        <name>(2S)-2-hydroxy-3-oxobutyl phosphate</name>
        <dbReference type="ChEBI" id="CHEBI:58830"/>
    </ligand>
</feature>
<feature type="binding site" evidence="1">
    <location>
        <position position="114"/>
    </location>
    <ligand>
        <name>5-amino-6-(D-ribitylamino)uracil</name>
        <dbReference type="ChEBI" id="CHEBI:15934"/>
    </ligand>
</feature>
<feature type="binding site" evidence="1">
    <location>
        <position position="128"/>
    </location>
    <ligand>
        <name>(2S)-2-hydroxy-3-oxobutyl phosphate</name>
        <dbReference type="ChEBI" id="CHEBI:58830"/>
    </ligand>
</feature>
<gene>
    <name evidence="1" type="primary">ribH</name>
    <name type="ordered locus">BHWA1_02030</name>
</gene>
<proteinExistence type="inferred from homology"/>